<organism>
    <name type="scientific">Homo sapiens</name>
    <name type="common">Human</name>
    <dbReference type="NCBI Taxonomy" id="9606"/>
    <lineage>
        <taxon>Eukaryota</taxon>
        <taxon>Metazoa</taxon>
        <taxon>Chordata</taxon>
        <taxon>Craniata</taxon>
        <taxon>Vertebrata</taxon>
        <taxon>Euteleostomi</taxon>
        <taxon>Mammalia</taxon>
        <taxon>Eutheria</taxon>
        <taxon>Euarchontoglires</taxon>
        <taxon>Primates</taxon>
        <taxon>Haplorrhini</taxon>
        <taxon>Catarrhini</taxon>
        <taxon>Hominidae</taxon>
        <taxon>Homo</taxon>
    </lineage>
</organism>
<reference key="1">
    <citation type="journal article" date="1991" name="J. Biol. Chem.">
        <title>Molecular identification of ADP-ribosylation factor mRNAs and their expression in mammalian cells.</title>
        <authorList>
            <person name="Tsuchiya M."/>
            <person name="Price S.R."/>
            <person name="Tsai S.-C."/>
            <person name="Moss J."/>
            <person name="Vaughan M."/>
        </authorList>
    </citation>
    <scope>NUCLEOTIDE SEQUENCE [MRNA]</scope>
</reference>
<reference key="2">
    <citation type="journal article" date="1997" name="Genomics">
        <title>Localization and characterization of the human ADP-ribosylation factor 5 (ARF5) gene.</title>
        <authorList>
            <person name="McGuire R.E."/>
            <person name="Daiger S.P."/>
            <person name="Green E.D."/>
        </authorList>
    </citation>
    <scope>NUCLEOTIDE SEQUENCE [GENOMIC DNA / MRNA]</scope>
</reference>
<reference key="3">
    <citation type="submission" date="2002-03" db="EMBL/GenBank/DDBJ databases">
        <title>cDNA clones of human proteins involved in signal transduction sequenced by the Guthrie cDNA resource center (www.cdna.org).</title>
        <authorList>
            <person name="Puhl H.L. III"/>
            <person name="Ikeda S.R."/>
            <person name="Aronstam R.S."/>
        </authorList>
    </citation>
    <scope>NUCLEOTIDE SEQUENCE [LARGE SCALE MRNA]</scope>
    <source>
        <tissue>Brain</tissue>
    </source>
</reference>
<reference key="4">
    <citation type="submission" date="2003-05" db="EMBL/GenBank/DDBJ databases">
        <title>Cloning of human full-length CDSs in BD Creator(TM) system donor vector.</title>
        <authorList>
            <person name="Kalnine N."/>
            <person name="Chen X."/>
            <person name="Rolfs A."/>
            <person name="Halleck A."/>
            <person name="Hines L."/>
            <person name="Eisenstein S."/>
            <person name="Koundinya M."/>
            <person name="Raphael J."/>
            <person name="Moreira D."/>
            <person name="Kelley T."/>
            <person name="LaBaer J."/>
            <person name="Lin Y."/>
            <person name="Phelan M."/>
            <person name="Farmer A."/>
        </authorList>
    </citation>
    <scope>NUCLEOTIDE SEQUENCE [LARGE SCALE MRNA]</scope>
</reference>
<reference key="5">
    <citation type="journal article" date="2004" name="Genome Res.">
        <title>The status, quality, and expansion of the NIH full-length cDNA project: the Mammalian Gene Collection (MGC).</title>
        <authorList>
            <consortium name="The MGC Project Team"/>
        </authorList>
    </citation>
    <scope>NUCLEOTIDE SEQUENCE [LARGE SCALE MRNA]</scope>
    <source>
        <tissue>Lung</tissue>
        <tissue>Skin</tissue>
    </source>
</reference>
<reference key="6">
    <citation type="journal article" date="1999" name="Mol. Cell. Biol.">
        <title>Identification of a new Pyk2 target protein with Arf-GAP activity.</title>
        <authorList>
            <person name="Andreev J."/>
            <person name="Simon J.-P."/>
            <person name="Sabatini D.D."/>
            <person name="Kam J."/>
            <person name="Plowman G."/>
            <person name="Randazzo P.A."/>
            <person name="Schlessinger J."/>
        </authorList>
    </citation>
    <scope>INTERACTION WITH ASAP2</scope>
</reference>
<reference key="7">
    <citation type="journal article" date="2002" name="Biochem. J.">
        <title>GGA proteins associate with Golgi membranes through interaction between their GGAH domains and ADP-ribosylation factors.</title>
        <authorList>
            <person name="Takatsu H."/>
            <person name="Yoshino K."/>
            <person name="Toda K."/>
            <person name="Nakayama K."/>
        </authorList>
    </citation>
    <scope>INTERACTION WITH GGA1; GGA2 AND GGA3</scope>
</reference>
<reference key="8">
    <citation type="journal article" date="2006" name="Proc. Natl. Acad. Sci. U.S.A.">
        <title>Structural basis for Rab11-dependent membrane recruitment of a family of Rab11-interacting protein 3 (FIP3)/Arfophilin-1.</title>
        <authorList>
            <person name="Shiba T."/>
            <person name="Koga H."/>
            <person name="Shin H.-W."/>
            <person name="Kawasaki M."/>
            <person name="Kato R."/>
            <person name="Nakayama K."/>
            <person name="Wakatsuki S."/>
        </authorList>
    </citation>
    <scope>INTERACTION WITH RAB11FIP3 AND RAB11FIP4</scope>
</reference>
<reference key="9">
    <citation type="journal article" date="2007" name="Traffic">
        <title>Specificity, promiscuity and localization of ARF protein interactions with NCS-1 and phosphatidylinositol-4 kinase-III beta.</title>
        <authorList>
            <person name="Haynes L.P."/>
            <person name="Sherwood M.W."/>
            <person name="Dolman N.J."/>
            <person name="Burgoyne R.D."/>
        </authorList>
    </citation>
    <scope>INTERACTION WITH NCS1</scope>
    <scope>SUBCELLULAR LOCATION</scope>
</reference>
<reference key="10">
    <citation type="journal article" date="2011" name="BMC Syst. Biol.">
        <title>Initial characterization of the human central proteome.</title>
        <authorList>
            <person name="Burkard T.R."/>
            <person name="Planyavsky M."/>
            <person name="Kaupe I."/>
            <person name="Breitwieser F.P."/>
            <person name="Buerckstuemmer T."/>
            <person name="Bennett K.L."/>
            <person name="Superti-Furga G."/>
            <person name="Colinge J."/>
        </authorList>
    </citation>
    <scope>IDENTIFICATION BY MASS SPECTROMETRY [LARGE SCALE ANALYSIS]</scope>
</reference>
<reference key="11">
    <citation type="journal article" date="2014" name="Nat. Commun.">
        <title>Global profiling of co- and post-translationally N-myristoylated proteomes in human cells.</title>
        <authorList>
            <person name="Thinon E."/>
            <person name="Serwa R.A."/>
            <person name="Broncel M."/>
            <person name="Brannigan J.A."/>
            <person name="Brassat U."/>
            <person name="Wright M.H."/>
            <person name="Heal W.P."/>
            <person name="Wilkinson A.J."/>
            <person name="Mann D.J."/>
            <person name="Tate E.W."/>
        </authorList>
    </citation>
    <scope>MYRISTOYLATION AT GLY-2</scope>
    <scope>CLEAVAGE OF INITIATOR METHIONINE</scope>
    <scope>IDENTIFICATION BY MASS SPECTROMETRY</scope>
</reference>
<reference key="12">
    <citation type="submission" date="2007-08" db="PDB data bank">
        <title>Structure of human ADP-ribosylation factor 5.</title>
        <authorList>
            <consortium name="Structural genomics consortium (SGC)"/>
        </authorList>
    </citation>
    <scope>X-RAY CRYSTALLOGRAPHY (1.76 ANGSTROMS) OF 8-180 IN COMPLEX WITH GDP</scope>
</reference>
<accession>P84085</accession>
<accession>P26437</accession>
<protein>
    <recommendedName>
        <fullName>ADP-ribosylation factor 5</fullName>
    </recommendedName>
</protein>
<feature type="initiator methionine" description="Removed" evidence="6">
    <location>
        <position position="1"/>
    </location>
</feature>
<feature type="chain" id="PRO_0000207396" description="ADP-ribosylation factor 5">
    <location>
        <begin position="2"/>
        <end position="180"/>
    </location>
</feature>
<feature type="binding site">
    <location>
        <begin position="24"/>
        <end position="31"/>
    </location>
    <ligand>
        <name>GTP</name>
        <dbReference type="ChEBI" id="CHEBI:37565"/>
    </ligand>
</feature>
<feature type="binding site">
    <location>
        <begin position="67"/>
        <end position="71"/>
    </location>
    <ligand>
        <name>GTP</name>
        <dbReference type="ChEBI" id="CHEBI:37565"/>
    </ligand>
</feature>
<feature type="binding site">
    <location>
        <begin position="126"/>
        <end position="129"/>
    </location>
    <ligand>
        <name>GTP</name>
        <dbReference type="ChEBI" id="CHEBI:37565"/>
    </ligand>
</feature>
<feature type="lipid moiety-binding region" description="N-myristoyl glycine" evidence="6">
    <location>
        <position position="2"/>
    </location>
</feature>
<feature type="helix" evidence="8">
    <location>
        <begin position="8"/>
        <end position="11"/>
    </location>
</feature>
<feature type="turn" evidence="8">
    <location>
        <begin position="12"/>
        <end position="15"/>
    </location>
</feature>
<feature type="strand" evidence="8">
    <location>
        <begin position="18"/>
        <end position="25"/>
    </location>
</feature>
<feature type="helix" evidence="8">
    <location>
        <begin position="30"/>
        <end position="37"/>
    </location>
</feature>
<feature type="strand" evidence="8">
    <location>
        <begin position="43"/>
        <end position="48"/>
    </location>
</feature>
<feature type="strand" evidence="8">
    <location>
        <begin position="51"/>
        <end position="58"/>
    </location>
</feature>
<feature type="strand" evidence="8">
    <location>
        <begin position="61"/>
        <end position="67"/>
    </location>
</feature>
<feature type="helix" evidence="8">
    <location>
        <begin position="78"/>
        <end position="83"/>
    </location>
</feature>
<feature type="strand" evidence="8">
    <location>
        <begin position="87"/>
        <end position="93"/>
    </location>
</feature>
<feature type="helix" evidence="8">
    <location>
        <begin position="97"/>
        <end position="99"/>
    </location>
</feature>
<feature type="helix" evidence="8">
    <location>
        <begin position="100"/>
        <end position="111"/>
    </location>
</feature>
<feature type="helix" evidence="8">
    <location>
        <begin position="114"/>
        <end position="116"/>
    </location>
</feature>
<feature type="strand" evidence="8">
    <location>
        <begin position="120"/>
        <end position="126"/>
    </location>
</feature>
<feature type="helix" evidence="8">
    <location>
        <begin position="136"/>
        <end position="142"/>
    </location>
</feature>
<feature type="helix" evidence="8">
    <location>
        <begin position="145"/>
        <end position="147"/>
    </location>
</feature>
<feature type="strand" evidence="8">
    <location>
        <begin position="153"/>
        <end position="157"/>
    </location>
</feature>
<feature type="turn" evidence="8">
    <location>
        <begin position="160"/>
        <end position="163"/>
    </location>
</feature>
<feature type="helix" evidence="8">
    <location>
        <begin position="166"/>
        <end position="176"/>
    </location>
</feature>
<feature type="turn" evidence="8">
    <location>
        <begin position="177"/>
        <end position="179"/>
    </location>
</feature>
<gene>
    <name type="primary">ARF5</name>
</gene>
<proteinExistence type="evidence at protein level"/>
<comment type="function">
    <text evidence="1">GTP-binding protein involved in protein trafficking; may modulate vesicle budding and uncoating within the Golgi apparatus.</text>
</comment>
<comment type="function">
    <text evidence="7">(Microbial infection) Functions as an allosteric activator of the cholera toxin catalytic subunit, an ADP-ribosyltransferase.</text>
</comment>
<comment type="subunit">
    <text evidence="2 3 4 5">Interacts (when activated) with GGA1, GGA2 and GGA3; the interaction is required for proper subcellular location of GGA1, GGA2 and GGA3 (PubMed:11950392). Binds ASAP2 (PubMed:10022920). Interacts with NCS1/FREQ at the Golgi complex (PubMed:17555535). Interacts with RAB11FIP3 and RAB11FIP4 (PubMed:17030804).</text>
</comment>
<comment type="interaction">
    <interactant intactId="EBI-4289908">
        <id>P84085</id>
    </interactant>
    <interactant intactId="EBI-3916242">
        <id>Q96HD9</id>
        <label>ACY3</label>
    </interactant>
    <organismsDiffer>false</organismsDiffer>
    <experiments>3</experiments>
</comment>
<comment type="interaction">
    <interactant intactId="EBI-4289908">
        <id>P84085</id>
    </interactant>
    <interactant intactId="EBI-2340258">
        <id>Q8N9I9</id>
        <label>DTX3</label>
    </interactant>
    <organismsDiffer>false</organismsDiffer>
    <experiments>3</experiments>
</comment>
<comment type="subcellular location">
    <subcellularLocation>
        <location evidence="5">Golgi apparatus</location>
    </subcellularLocation>
    <subcellularLocation>
        <location evidence="5">Cytoplasm</location>
        <location evidence="5">Perinuclear region</location>
    </subcellularLocation>
    <subcellularLocation>
        <location evidence="7">Membrane</location>
        <topology evidence="7">Lipid-anchor</topology>
    </subcellularLocation>
    <subcellularLocation>
        <location evidence="1">Golgi apparatus</location>
        <location evidence="1">trans-Golgi network membrane</location>
        <topology evidence="1">Lipid-anchor</topology>
    </subcellularLocation>
</comment>
<comment type="similarity">
    <text evidence="7">Belongs to the small GTPase superfamily. Arf family.</text>
</comment>
<evidence type="ECO:0000250" key="1">
    <source>
        <dbReference type="UniProtKB" id="P84084"/>
    </source>
</evidence>
<evidence type="ECO:0000269" key="2">
    <source>
    </source>
</evidence>
<evidence type="ECO:0000269" key="3">
    <source>
    </source>
</evidence>
<evidence type="ECO:0000269" key="4">
    <source>
    </source>
</evidence>
<evidence type="ECO:0000269" key="5">
    <source>
    </source>
</evidence>
<evidence type="ECO:0000269" key="6">
    <source>
    </source>
</evidence>
<evidence type="ECO:0000305" key="7"/>
<evidence type="ECO:0007829" key="8">
    <source>
        <dbReference type="PDB" id="2B6H"/>
    </source>
</evidence>
<name>ARF5_HUMAN</name>
<dbReference type="EMBL" id="M57567">
    <property type="protein sequence ID" value="AAA90927.1"/>
    <property type="molecule type" value="mRNA"/>
</dbReference>
<dbReference type="EMBL" id="U73002">
    <property type="protein sequence ID" value="AAC51299.1"/>
    <property type="molecule type" value="Genomic_DNA"/>
</dbReference>
<dbReference type="EMBL" id="AF493884">
    <property type="protein sequence ID" value="AAM12598.1"/>
    <property type="molecule type" value="mRNA"/>
</dbReference>
<dbReference type="EMBL" id="BT007087">
    <property type="protein sequence ID" value="AAP35750.1"/>
    <property type="molecule type" value="mRNA"/>
</dbReference>
<dbReference type="EMBL" id="BC003043">
    <property type="protein sequence ID" value="AAH03043.1"/>
    <property type="molecule type" value="mRNA"/>
</dbReference>
<dbReference type="EMBL" id="BC033104">
    <property type="protein sequence ID" value="AAH33104.1"/>
    <property type="molecule type" value="mRNA"/>
</dbReference>
<dbReference type="CCDS" id="CCDS34745.1"/>
<dbReference type="PIR" id="A23741">
    <property type="entry name" value="A23741"/>
</dbReference>
<dbReference type="RefSeq" id="NP_001653.1">
    <property type="nucleotide sequence ID" value="NM_001662.4"/>
</dbReference>
<dbReference type="PDB" id="2B6H">
    <property type="method" value="X-ray"/>
    <property type="resolution" value="1.76 A"/>
    <property type="chains" value="A=8-180"/>
</dbReference>
<dbReference type="PDBsum" id="2B6H"/>
<dbReference type="SMR" id="P84085"/>
<dbReference type="BioGRID" id="106876">
    <property type="interactions" value="258"/>
</dbReference>
<dbReference type="DIP" id="DIP-61289N"/>
<dbReference type="FunCoup" id="P84085">
    <property type="interactions" value="1129"/>
</dbReference>
<dbReference type="IntAct" id="P84085">
    <property type="interactions" value="83"/>
</dbReference>
<dbReference type="MINT" id="P84085"/>
<dbReference type="STRING" id="9606.ENSP00000000233"/>
<dbReference type="ChEMBL" id="CHEMBL5986"/>
<dbReference type="GlyGen" id="P84085">
    <property type="glycosylation" value="1 site, 1 O-linked glycan (1 site)"/>
</dbReference>
<dbReference type="iPTMnet" id="P84085"/>
<dbReference type="MetOSite" id="P84085"/>
<dbReference type="PhosphoSitePlus" id="P84085"/>
<dbReference type="SwissPalm" id="P84085"/>
<dbReference type="BioMuta" id="ARF5"/>
<dbReference type="DMDM" id="51316990"/>
<dbReference type="jPOST" id="P84085"/>
<dbReference type="MassIVE" id="P84085"/>
<dbReference type="PaxDb" id="9606-ENSP00000000233"/>
<dbReference type="PeptideAtlas" id="P84085"/>
<dbReference type="PRIDE" id="P84085"/>
<dbReference type="ProteomicsDB" id="57748"/>
<dbReference type="Pumba" id="P84085"/>
<dbReference type="TopDownProteomics" id="P84085"/>
<dbReference type="Antibodypedia" id="31827">
    <property type="antibodies" value="251 antibodies from 32 providers"/>
</dbReference>
<dbReference type="DNASU" id="381"/>
<dbReference type="Ensembl" id="ENST00000000233.10">
    <property type="protein sequence ID" value="ENSP00000000233.5"/>
    <property type="gene ID" value="ENSG00000004059.11"/>
</dbReference>
<dbReference type="GeneID" id="381"/>
<dbReference type="KEGG" id="hsa:381"/>
<dbReference type="MANE-Select" id="ENST00000000233.10">
    <property type="protein sequence ID" value="ENSP00000000233.5"/>
    <property type="RefSeq nucleotide sequence ID" value="NM_001662.4"/>
    <property type="RefSeq protein sequence ID" value="NP_001653.1"/>
</dbReference>
<dbReference type="UCSC" id="uc003vmb.3">
    <property type="organism name" value="human"/>
</dbReference>
<dbReference type="AGR" id="HGNC:658"/>
<dbReference type="CTD" id="381"/>
<dbReference type="DisGeNET" id="381"/>
<dbReference type="GeneCards" id="ARF5"/>
<dbReference type="HGNC" id="HGNC:658">
    <property type="gene designation" value="ARF5"/>
</dbReference>
<dbReference type="HPA" id="ENSG00000004059">
    <property type="expression patterns" value="Low tissue specificity"/>
</dbReference>
<dbReference type="MIM" id="103188">
    <property type="type" value="gene"/>
</dbReference>
<dbReference type="neXtProt" id="NX_P84085"/>
<dbReference type="OpenTargets" id="ENSG00000004059"/>
<dbReference type="PharmGKB" id="PA24941"/>
<dbReference type="VEuPathDB" id="HostDB:ENSG00000004059"/>
<dbReference type="eggNOG" id="KOG0070">
    <property type="taxonomic scope" value="Eukaryota"/>
</dbReference>
<dbReference type="GeneTree" id="ENSGT00940000156878"/>
<dbReference type="InParanoid" id="P84085"/>
<dbReference type="OMA" id="SPQWYVQ"/>
<dbReference type="OrthoDB" id="2011769at2759"/>
<dbReference type="PAN-GO" id="P84085">
    <property type="GO annotations" value="5 GO annotations based on evolutionary models"/>
</dbReference>
<dbReference type="PhylomeDB" id="P84085"/>
<dbReference type="TreeFam" id="TF300808"/>
<dbReference type="PathwayCommons" id="P84085"/>
<dbReference type="Reactome" id="R-HSA-6807878">
    <property type="pathway name" value="COPI-mediated anterograde transport"/>
</dbReference>
<dbReference type="Reactome" id="R-HSA-6811434">
    <property type="pathway name" value="COPI-dependent Golgi-to-ER retrograde traffic"/>
</dbReference>
<dbReference type="SignaLink" id="P84085"/>
<dbReference type="SIGNOR" id="P84085"/>
<dbReference type="BioGRID-ORCS" id="381">
    <property type="hits" value="14 hits in 1161 CRISPR screens"/>
</dbReference>
<dbReference type="CD-CODE" id="FB4E32DD">
    <property type="entry name" value="Presynaptic clusters and postsynaptic densities"/>
</dbReference>
<dbReference type="ChiTaRS" id="ARF5">
    <property type="organism name" value="human"/>
</dbReference>
<dbReference type="EvolutionaryTrace" id="P84085"/>
<dbReference type="GeneWiki" id="ARF5"/>
<dbReference type="GenomeRNAi" id="381"/>
<dbReference type="Pharos" id="P84085">
    <property type="development level" value="Tbio"/>
</dbReference>
<dbReference type="PRO" id="PR:P84085"/>
<dbReference type="Proteomes" id="UP000005640">
    <property type="component" value="Chromosome 7"/>
</dbReference>
<dbReference type="RNAct" id="P84085">
    <property type="molecule type" value="protein"/>
</dbReference>
<dbReference type="Bgee" id="ENSG00000004059">
    <property type="expression patterns" value="Expressed in lower esophagus mucosa and 94 other cell types or tissues"/>
</dbReference>
<dbReference type="ExpressionAtlas" id="P84085">
    <property type="expression patterns" value="baseline and differential"/>
</dbReference>
<dbReference type="GO" id="GO:0005737">
    <property type="term" value="C:cytoplasm"/>
    <property type="evidence" value="ECO:0000318"/>
    <property type="project" value="GO_Central"/>
</dbReference>
<dbReference type="GO" id="GO:0070062">
    <property type="term" value="C:extracellular exosome"/>
    <property type="evidence" value="ECO:0007005"/>
    <property type="project" value="UniProtKB"/>
</dbReference>
<dbReference type="GO" id="GO:0005794">
    <property type="term" value="C:Golgi apparatus"/>
    <property type="evidence" value="ECO:0007669"/>
    <property type="project" value="UniProtKB-SubCell"/>
</dbReference>
<dbReference type="GO" id="GO:0048471">
    <property type="term" value="C:perinuclear region of cytoplasm"/>
    <property type="evidence" value="ECO:0007669"/>
    <property type="project" value="UniProtKB-SubCell"/>
</dbReference>
<dbReference type="GO" id="GO:0005886">
    <property type="term" value="C:plasma membrane"/>
    <property type="evidence" value="ECO:0000318"/>
    <property type="project" value="GO_Central"/>
</dbReference>
<dbReference type="GO" id="GO:0005525">
    <property type="term" value="F:GTP binding"/>
    <property type="evidence" value="ECO:0000318"/>
    <property type="project" value="GO_Central"/>
</dbReference>
<dbReference type="GO" id="GO:0003924">
    <property type="term" value="F:GTPase activity"/>
    <property type="evidence" value="ECO:0000304"/>
    <property type="project" value="ProtInc"/>
</dbReference>
<dbReference type="GO" id="GO:0006886">
    <property type="term" value="P:intracellular protein transport"/>
    <property type="evidence" value="ECO:0000318"/>
    <property type="project" value="GO_Central"/>
</dbReference>
<dbReference type="GO" id="GO:0006890">
    <property type="term" value="P:retrograde vesicle-mediated transport, Golgi to endoplasmic reticulum"/>
    <property type="evidence" value="ECO:0000316"/>
    <property type="project" value="WormBase"/>
</dbReference>
<dbReference type="GO" id="GO:0016192">
    <property type="term" value="P:vesicle-mediated transport"/>
    <property type="evidence" value="ECO:0000318"/>
    <property type="project" value="GO_Central"/>
</dbReference>
<dbReference type="CDD" id="cd04150">
    <property type="entry name" value="Arf1_5_like"/>
    <property type="match status" value="1"/>
</dbReference>
<dbReference type="FunFam" id="3.40.50.300:FF:000024">
    <property type="entry name" value="ADP-ribosylation factor 1"/>
    <property type="match status" value="1"/>
</dbReference>
<dbReference type="Gene3D" id="3.40.50.300">
    <property type="entry name" value="P-loop containing nucleotide triphosphate hydrolases"/>
    <property type="match status" value="1"/>
</dbReference>
<dbReference type="InterPro" id="IPR045872">
    <property type="entry name" value="Arf1-5-like"/>
</dbReference>
<dbReference type="InterPro" id="IPR027417">
    <property type="entry name" value="P-loop_NTPase"/>
</dbReference>
<dbReference type="InterPro" id="IPR005225">
    <property type="entry name" value="Small_GTP-bd"/>
</dbReference>
<dbReference type="InterPro" id="IPR024156">
    <property type="entry name" value="Small_GTPase_ARF"/>
</dbReference>
<dbReference type="InterPro" id="IPR006689">
    <property type="entry name" value="Small_GTPase_ARF/SAR"/>
</dbReference>
<dbReference type="NCBIfam" id="TIGR00231">
    <property type="entry name" value="small_GTP"/>
    <property type="match status" value="1"/>
</dbReference>
<dbReference type="PANTHER" id="PTHR11711">
    <property type="entry name" value="ADP RIBOSYLATION FACTOR-RELATED"/>
    <property type="match status" value="1"/>
</dbReference>
<dbReference type="Pfam" id="PF00025">
    <property type="entry name" value="Arf"/>
    <property type="match status" value="1"/>
</dbReference>
<dbReference type="PRINTS" id="PR00328">
    <property type="entry name" value="SAR1GTPBP"/>
</dbReference>
<dbReference type="SMART" id="SM00177">
    <property type="entry name" value="ARF"/>
    <property type="match status" value="1"/>
</dbReference>
<dbReference type="SMART" id="SM00175">
    <property type="entry name" value="RAB"/>
    <property type="match status" value="1"/>
</dbReference>
<dbReference type="SMART" id="SM00178">
    <property type="entry name" value="SAR"/>
    <property type="match status" value="1"/>
</dbReference>
<dbReference type="SUPFAM" id="SSF52540">
    <property type="entry name" value="P-loop containing nucleoside triphosphate hydrolases"/>
    <property type="match status" value="1"/>
</dbReference>
<dbReference type="PROSITE" id="PS51417">
    <property type="entry name" value="ARF"/>
    <property type="match status" value="1"/>
</dbReference>
<keyword id="KW-0002">3D-structure</keyword>
<keyword id="KW-0963">Cytoplasm</keyword>
<keyword id="KW-0931">ER-Golgi transport</keyword>
<keyword id="KW-0333">Golgi apparatus</keyword>
<keyword id="KW-0342">GTP-binding</keyword>
<keyword id="KW-0449">Lipoprotein</keyword>
<keyword id="KW-0472">Membrane</keyword>
<keyword id="KW-0519">Myristate</keyword>
<keyword id="KW-0547">Nucleotide-binding</keyword>
<keyword id="KW-0653">Protein transport</keyword>
<keyword id="KW-1267">Proteomics identification</keyword>
<keyword id="KW-1185">Reference proteome</keyword>
<keyword id="KW-0813">Transport</keyword>
<sequence length="180" mass="20530">MGLTVSALFSRIFGKKQMRILMVGLDAAGKTTILYKLKLGEIVTTIPTIGFNVETVEYKNICFTVWDVGGQDKIRPLWRHYFQNTQGLIFVVDSNDRERVQESADELQKMLQEDELRDAVLLVFANKQDMPNAMPVSELTDKLGLQHLRSRTWYVQATCATQGTGLYDGLDWLSHELSKR</sequence>